<gene>
    <name type="primary">vsx2</name>
    <name type="synonym">chx10</name>
</gene>
<feature type="chain" id="PRO_0000049361" description="Visual system homeobox 2">
    <location>
        <begin position="1"/>
        <end position="393"/>
    </location>
</feature>
<feature type="domain" description="CVC" evidence="6">
    <location>
        <begin position="222"/>
        <end position="296"/>
    </location>
</feature>
<feature type="DNA-binding region" description="Homeobox" evidence="4">
    <location>
        <begin position="162"/>
        <end position="221"/>
    </location>
</feature>
<feature type="region of interest" description="Disordered" evidence="7">
    <location>
        <begin position="121"/>
        <end position="165"/>
    </location>
</feature>
<feature type="region of interest" description="Disordered" evidence="7">
    <location>
        <begin position="304"/>
        <end position="393"/>
    </location>
</feature>
<feature type="short sequence motif" description="Octapeptide motif">
    <location>
        <begin position="44"/>
        <end position="51"/>
    </location>
</feature>
<feature type="short sequence motif" description="Nuclear localization signal" evidence="3">
    <location>
        <begin position="147"/>
        <end position="151"/>
    </location>
</feature>
<feature type="short sequence motif" description="OAR" evidence="5">
    <location>
        <begin position="341"/>
        <end position="354"/>
    </location>
</feature>
<feature type="compositionally biased region" description="Basic and acidic residues" evidence="7">
    <location>
        <begin position="316"/>
        <end position="340"/>
    </location>
</feature>
<feature type="compositionally biased region" description="Basic and acidic residues" evidence="7">
    <location>
        <begin position="367"/>
        <end position="381"/>
    </location>
</feature>
<keyword id="KW-0010">Activator</keyword>
<keyword id="KW-0217">Developmental protein</keyword>
<keyword id="KW-0238">DNA-binding</keyword>
<keyword id="KW-0371">Homeobox</keyword>
<keyword id="KW-0539">Nucleus</keyword>
<keyword id="KW-1185">Reference proteome</keyword>
<keyword id="KW-0678">Repressor</keyword>
<keyword id="KW-0716">Sensory transduction</keyword>
<keyword id="KW-0804">Transcription</keyword>
<keyword id="KW-0805">Transcription regulation</keyword>
<keyword id="KW-0844">Vision</keyword>
<proteinExistence type="evidence at transcript level"/>
<accession>Q9I9A3</accession>
<name>VSX2_ORYLA</name>
<organism>
    <name type="scientific">Oryzias latipes</name>
    <name type="common">Japanese rice fish</name>
    <name type="synonym">Japanese killifish</name>
    <dbReference type="NCBI Taxonomy" id="8090"/>
    <lineage>
        <taxon>Eukaryota</taxon>
        <taxon>Metazoa</taxon>
        <taxon>Chordata</taxon>
        <taxon>Craniata</taxon>
        <taxon>Vertebrata</taxon>
        <taxon>Euteleostomi</taxon>
        <taxon>Actinopterygii</taxon>
        <taxon>Neopterygii</taxon>
        <taxon>Teleostei</taxon>
        <taxon>Neoteleostei</taxon>
        <taxon>Acanthomorphata</taxon>
        <taxon>Ovalentaria</taxon>
        <taxon>Atherinomorphae</taxon>
        <taxon>Beloniformes</taxon>
        <taxon>Adrianichthyidae</taxon>
        <taxon>Oryziinae</taxon>
        <taxon>Oryzias</taxon>
    </lineage>
</organism>
<protein>
    <recommendedName>
        <fullName>Visual system homeobox 2</fullName>
    </recommendedName>
    <alternativeName>
        <fullName>Ceh-10 homeodomain-containing homolog</fullName>
    </alternativeName>
    <alternativeName>
        <fullName>Homeobox protein CHX10</fullName>
    </alternativeName>
    <alternativeName>
        <fullName>Transcription factor VSX2</fullName>
    </alternativeName>
</protein>
<sequence length="393" mass="42987">MTGKQGVALSESLNPAEKTSLVINGGSLQPKISATNPPPRCTGFGIQEILGLNKEPATAPRSPLSALPAGAHLIAARSVLGPAGVGVGMGLIGPAGIPSFYSQPAFLETVLADGHDVRLQPHNRSARPLDANQSVSSDSEDLSSSERKLSKSSVNQSKKRKKRRHRTIFTSYQLEELEKAFNEAHYPDVYAREMLAMKTELPEDRIQVWFQNRRAKWRKREKCWGRSTVMAEYGLYGAMVRHSIPLPESILKSAKDGIMESCAPWLLVQDGLPINRRYSKSEYPQLFAGMHKKSMEAANLPATAKCDAPQQPSAQRSEDVEAEEKRSDGKSTISKEEMRENSIAALRAKAQEHSAKVLGTVSPGKLLEGKQEKQAVGEKVSEPPSPTEEQKSP</sequence>
<evidence type="ECO:0000250" key="1">
    <source>
        <dbReference type="UniProtKB" id="O42477"/>
    </source>
</evidence>
<evidence type="ECO:0000250" key="2">
    <source>
        <dbReference type="UniProtKB" id="Q61412"/>
    </source>
</evidence>
<evidence type="ECO:0000255" key="3"/>
<evidence type="ECO:0000255" key="4">
    <source>
        <dbReference type="PROSITE-ProRule" id="PRU00108"/>
    </source>
</evidence>
<evidence type="ECO:0000255" key="5">
    <source>
        <dbReference type="PROSITE-ProRule" id="PRU00138"/>
    </source>
</evidence>
<evidence type="ECO:0000255" key="6">
    <source>
        <dbReference type="PROSITE-ProRule" id="PRU00829"/>
    </source>
</evidence>
<evidence type="ECO:0000256" key="7">
    <source>
        <dbReference type="SAM" id="MobiDB-lite"/>
    </source>
</evidence>
<evidence type="ECO:0000305" key="8"/>
<reference key="1">
    <citation type="journal article" date="2000" name="Development">
        <title>The conditional medaka mutation eyeless uncouples patterning and morphogenesis of the eye.</title>
        <authorList>
            <person name="Winkler S."/>
            <person name="Loosli F."/>
            <person name="Henrich T."/>
            <person name="Wakamatsu Y."/>
            <person name="Wittbrodt J."/>
        </authorList>
    </citation>
    <scope>NUCLEOTIDE SEQUENCE [MRNA]</scope>
    <source>
        <tissue>Embryo</tissue>
    </source>
</reference>
<dbReference type="EMBL" id="AJ250404">
    <property type="protein sequence ID" value="CAB88702.1"/>
    <property type="molecule type" value="mRNA"/>
</dbReference>
<dbReference type="RefSeq" id="NP_001098336.1">
    <property type="nucleotide sequence ID" value="NM_001104866.1"/>
</dbReference>
<dbReference type="RefSeq" id="XP_023807002.1">
    <property type="nucleotide sequence ID" value="XM_023951234.1"/>
</dbReference>
<dbReference type="SMR" id="Q9I9A3"/>
<dbReference type="FunCoup" id="Q9I9A3">
    <property type="interactions" value="437"/>
</dbReference>
<dbReference type="STRING" id="8090.ENSORLP00000020883"/>
<dbReference type="Ensembl" id="ENSORLT00000020884.2">
    <property type="protein sequence ID" value="ENSORLP00000020883.2"/>
    <property type="gene ID" value="ENSORLG00000016694.2"/>
</dbReference>
<dbReference type="GeneID" id="100049516"/>
<dbReference type="KEGG" id="ola:100049516"/>
<dbReference type="CTD" id="338917"/>
<dbReference type="eggNOG" id="KOG0494">
    <property type="taxonomic scope" value="Eukaryota"/>
</dbReference>
<dbReference type="GeneTree" id="ENSGT00940000157776"/>
<dbReference type="InParanoid" id="Q9I9A3"/>
<dbReference type="OrthoDB" id="6159439at2759"/>
<dbReference type="Proteomes" id="UP000001038">
    <property type="component" value="Chromosome 22"/>
</dbReference>
<dbReference type="Proteomes" id="UP000265180">
    <property type="component" value="Unplaced"/>
</dbReference>
<dbReference type="Proteomes" id="UP000265200">
    <property type="component" value="Unplaced"/>
</dbReference>
<dbReference type="Bgee" id="ENSORLG00000016694">
    <property type="expression patterns" value="Expressed in testis and 6 other cell types or tissues"/>
</dbReference>
<dbReference type="GO" id="GO:0005634">
    <property type="term" value="C:nucleus"/>
    <property type="evidence" value="ECO:0000318"/>
    <property type="project" value="GO_Central"/>
</dbReference>
<dbReference type="GO" id="GO:0000981">
    <property type="term" value="F:DNA-binding transcription factor activity, RNA polymerase II-specific"/>
    <property type="evidence" value="ECO:0007669"/>
    <property type="project" value="InterPro"/>
</dbReference>
<dbReference type="GO" id="GO:0000976">
    <property type="term" value="F:transcription cis-regulatory region binding"/>
    <property type="evidence" value="ECO:0000318"/>
    <property type="project" value="GO_Central"/>
</dbReference>
<dbReference type="GO" id="GO:0006355">
    <property type="term" value="P:regulation of DNA-templated transcription"/>
    <property type="evidence" value="ECO:0000318"/>
    <property type="project" value="GO_Central"/>
</dbReference>
<dbReference type="GO" id="GO:0007601">
    <property type="term" value="P:visual perception"/>
    <property type="evidence" value="ECO:0007669"/>
    <property type="project" value="UniProtKB-KW"/>
</dbReference>
<dbReference type="CDD" id="cd00086">
    <property type="entry name" value="homeodomain"/>
    <property type="match status" value="1"/>
</dbReference>
<dbReference type="FunFam" id="1.10.10.60:FF:000065">
    <property type="entry name" value="Visual system homeobox 1"/>
    <property type="match status" value="1"/>
</dbReference>
<dbReference type="Gene3D" id="1.10.10.60">
    <property type="entry name" value="Homeodomain-like"/>
    <property type="match status" value="1"/>
</dbReference>
<dbReference type="InterPro" id="IPR023339">
    <property type="entry name" value="CVC"/>
</dbReference>
<dbReference type="InterPro" id="IPR001356">
    <property type="entry name" value="HD"/>
</dbReference>
<dbReference type="InterPro" id="IPR017970">
    <property type="entry name" value="Homeobox_CS"/>
</dbReference>
<dbReference type="InterPro" id="IPR009057">
    <property type="entry name" value="Homeodomain-like_sf"/>
</dbReference>
<dbReference type="InterPro" id="IPR003654">
    <property type="entry name" value="OAR_dom"/>
</dbReference>
<dbReference type="InterPro" id="IPR052294">
    <property type="entry name" value="VSX_homeobox_regulators"/>
</dbReference>
<dbReference type="PANTHER" id="PTHR46892">
    <property type="entry name" value="VISUAL SYSTEM HOMEOBOX 2"/>
    <property type="match status" value="1"/>
</dbReference>
<dbReference type="PANTHER" id="PTHR46892:SF3">
    <property type="entry name" value="VISUAL SYSTEM HOMEOBOX 2"/>
    <property type="match status" value="1"/>
</dbReference>
<dbReference type="Pfam" id="PF00046">
    <property type="entry name" value="Homeodomain"/>
    <property type="match status" value="1"/>
</dbReference>
<dbReference type="Pfam" id="PF03826">
    <property type="entry name" value="OAR"/>
    <property type="match status" value="1"/>
</dbReference>
<dbReference type="SMART" id="SM00389">
    <property type="entry name" value="HOX"/>
    <property type="match status" value="1"/>
</dbReference>
<dbReference type="SUPFAM" id="SSF46689">
    <property type="entry name" value="Homeodomain-like"/>
    <property type="match status" value="1"/>
</dbReference>
<dbReference type="PROSITE" id="PS51496">
    <property type="entry name" value="CVC"/>
    <property type="match status" value="1"/>
</dbReference>
<dbReference type="PROSITE" id="PS00027">
    <property type="entry name" value="HOMEOBOX_1"/>
    <property type="match status" value="1"/>
</dbReference>
<dbReference type="PROSITE" id="PS50071">
    <property type="entry name" value="HOMEOBOX_2"/>
    <property type="match status" value="1"/>
</dbReference>
<dbReference type="PROSITE" id="PS50803">
    <property type="entry name" value="OAR"/>
    <property type="match status" value="1"/>
</dbReference>
<comment type="function">
    <text evidence="1 2">Acts as a transcriptional regulator (By similarity). Mediates the differentiation of V2a interneurons (By similarity). Plays a role in eye development and organization of the neuroretina (By similarity).</text>
</comment>
<comment type="subcellular location">
    <subcellularLocation>
        <location evidence="2">Nucleus</location>
    </subcellularLocation>
</comment>
<comment type="similarity">
    <text evidence="8">Belongs to the paired homeobox family.</text>
</comment>